<accession>Q38903</accession>
<dbReference type="EMBL" id="U43026">
    <property type="protein sequence ID" value="AAC49852.1"/>
    <property type="molecule type" value="mRNA"/>
</dbReference>
<dbReference type="EMBL" id="AF115469">
    <property type="protein sequence ID" value="AAF40241.1"/>
    <property type="molecule type" value="Genomic_DNA"/>
</dbReference>
<dbReference type="EMBL" id="AB006698">
    <property type="protein sequence ID" value="BAB08242.1"/>
    <property type="molecule type" value="Genomic_DNA"/>
</dbReference>
<dbReference type="EMBL" id="CP002688">
    <property type="protein sequence ID" value="AED95321.1"/>
    <property type="molecule type" value="Genomic_DNA"/>
</dbReference>
<dbReference type="PIR" id="T48862">
    <property type="entry name" value="T48862"/>
</dbReference>
<dbReference type="PDB" id="2WBL">
    <property type="method" value="X-ray"/>
    <property type="resolution" value="2.90 A"/>
    <property type="chains" value="C/D=1-180"/>
</dbReference>
<dbReference type="PDBsum" id="2WBL"/>
<dbReference type="SMR" id="Q38903"/>
<dbReference type="BioGRID" id="19886">
    <property type="interactions" value="3"/>
</dbReference>
<dbReference type="FunCoup" id="Q38903">
    <property type="interactions" value="2579"/>
</dbReference>
<dbReference type="IntAct" id="Q38903">
    <property type="interactions" value="1"/>
</dbReference>
<dbReference type="STRING" id="3702.Q38903"/>
<dbReference type="PaxDb" id="3702-AT5G45970.1"/>
<dbReference type="ProteomicsDB" id="236451"/>
<dbReference type="EnsemblPlants" id="AT5G45970.1">
    <property type="protein sequence ID" value="AT5G45970.1"/>
    <property type="gene ID" value="AT5G45970"/>
</dbReference>
<dbReference type="GeneID" id="834637"/>
<dbReference type="Gramene" id="AT5G45970.1">
    <property type="protein sequence ID" value="AT5G45970.1"/>
    <property type="gene ID" value="AT5G45970"/>
</dbReference>
<dbReference type="KEGG" id="ath:AT5G45970"/>
<dbReference type="Araport" id="AT5G45970"/>
<dbReference type="TAIR" id="AT5G45970">
    <property type="gene designation" value="RAC2"/>
</dbReference>
<dbReference type="eggNOG" id="KOG0393">
    <property type="taxonomic scope" value="Eukaryota"/>
</dbReference>
<dbReference type="HOGENOM" id="CLU_041217_21_3_1"/>
<dbReference type="InParanoid" id="Q38903"/>
<dbReference type="OMA" id="DNVASKW"/>
<dbReference type="OrthoDB" id="8830751at2759"/>
<dbReference type="PhylomeDB" id="Q38903"/>
<dbReference type="EvolutionaryTrace" id="Q38903"/>
<dbReference type="PRO" id="PR:Q38903"/>
<dbReference type="Proteomes" id="UP000006548">
    <property type="component" value="Chromosome 5"/>
</dbReference>
<dbReference type="ExpressionAtlas" id="Q38903">
    <property type="expression patterns" value="baseline and differential"/>
</dbReference>
<dbReference type="GO" id="GO:0005737">
    <property type="term" value="C:cytoplasm"/>
    <property type="evidence" value="ECO:0007669"/>
    <property type="project" value="UniProtKB-SubCell"/>
</dbReference>
<dbReference type="GO" id="GO:0005886">
    <property type="term" value="C:plasma membrane"/>
    <property type="evidence" value="ECO:0000314"/>
    <property type="project" value="TAIR"/>
</dbReference>
<dbReference type="GO" id="GO:0005525">
    <property type="term" value="F:GTP binding"/>
    <property type="evidence" value="ECO:0007669"/>
    <property type="project" value="UniProtKB-KW"/>
</dbReference>
<dbReference type="GO" id="GO:0003924">
    <property type="term" value="F:GTPase activity"/>
    <property type="evidence" value="ECO:0007669"/>
    <property type="project" value="InterPro"/>
</dbReference>
<dbReference type="GO" id="GO:0007264">
    <property type="term" value="P:small GTPase-mediated signal transduction"/>
    <property type="evidence" value="ECO:0007669"/>
    <property type="project" value="InterPro"/>
</dbReference>
<dbReference type="CDD" id="cd04133">
    <property type="entry name" value="Rop_like"/>
    <property type="match status" value="1"/>
</dbReference>
<dbReference type="FunFam" id="3.40.50.300:FF:000535">
    <property type="entry name" value="rac-like GTP-binding protein RAC2"/>
    <property type="match status" value="1"/>
</dbReference>
<dbReference type="Gene3D" id="3.40.50.300">
    <property type="entry name" value="P-loop containing nucleotide triphosphate hydrolases"/>
    <property type="match status" value="1"/>
</dbReference>
<dbReference type="InterPro" id="IPR027417">
    <property type="entry name" value="P-loop_NTPase"/>
</dbReference>
<dbReference type="InterPro" id="IPR005225">
    <property type="entry name" value="Small_GTP-bd"/>
</dbReference>
<dbReference type="InterPro" id="IPR001806">
    <property type="entry name" value="Small_GTPase"/>
</dbReference>
<dbReference type="InterPro" id="IPR003578">
    <property type="entry name" value="Small_GTPase_Rho"/>
</dbReference>
<dbReference type="NCBIfam" id="TIGR00231">
    <property type="entry name" value="small_GTP"/>
    <property type="match status" value="1"/>
</dbReference>
<dbReference type="PANTHER" id="PTHR24072">
    <property type="entry name" value="RHO FAMILY GTPASE"/>
    <property type="match status" value="1"/>
</dbReference>
<dbReference type="Pfam" id="PF00071">
    <property type="entry name" value="Ras"/>
    <property type="match status" value="1"/>
</dbReference>
<dbReference type="PRINTS" id="PR00449">
    <property type="entry name" value="RASTRNSFRMNG"/>
</dbReference>
<dbReference type="SMART" id="SM00175">
    <property type="entry name" value="RAB"/>
    <property type="match status" value="1"/>
</dbReference>
<dbReference type="SMART" id="SM00173">
    <property type="entry name" value="RAS"/>
    <property type="match status" value="1"/>
</dbReference>
<dbReference type="SMART" id="SM00174">
    <property type="entry name" value="RHO"/>
    <property type="match status" value="1"/>
</dbReference>
<dbReference type="SUPFAM" id="SSF52540">
    <property type="entry name" value="P-loop containing nucleoside triphosphate hydrolases"/>
    <property type="match status" value="1"/>
</dbReference>
<dbReference type="PROSITE" id="PS51420">
    <property type="entry name" value="RHO"/>
    <property type="match status" value="1"/>
</dbReference>
<name>RAC2_ARATH</name>
<comment type="function">
    <text evidence="1">Inactive GDP-bound Rho GTPases reside in the cytosol, are found in a complex with Rho GDP-dissociation inhibitors (Rho GDIs), and are released from the GDI protein in order to translocate to membranes upon activation.</text>
</comment>
<comment type="subcellular location">
    <subcellularLocation>
        <location evidence="1">Cytoplasm</location>
    </subcellularLocation>
    <subcellularLocation>
        <location evidence="1">Membrane</location>
        <topology evidence="1">Peripheral membrane protein</topology>
    </subcellularLocation>
    <text>Associated with the membrane when activated.</text>
</comment>
<comment type="tissue specificity">
    <text>Expressed exclusively in the root, hypocotyl and stem.</text>
</comment>
<comment type="similarity">
    <text evidence="3">Belongs to the small GTPase superfamily. Rho family.</text>
</comment>
<protein>
    <recommendedName>
        <fullName>Rac-like GTP-binding protein ARAC2</fullName>
    </recommendedName>
    <alternativeName>
        <fullName>GTPase protein ROP7</fullName>
    </alternativeName>
</protein>
<feature type="chain" id="PRO_0000198916" description="Rac-like GTP-binding protein ARAC2">
    <location>
        <begin position="1"/>
        <end position="198"/>
    </location>
</feature>
<feature type="propeptide" id="PRO_0000227581" description="Removed in mature form" evidence="2">
    <location>
        <begin position="199"/>
        <end position="201"/>
    </location>
</feature>
<feature type="short sequence motif" description="Effector region" evidence="2">
    <location>
        <begin position="35"/>
        <end position="43"/>
    </location>
</feature>
<feature type="binding site" evidence="1">
    <location>
        <begin position="13"/>
        <end position="20"/>
    </location>
    <ligand>
        <name>GTP</name>
        <dbReference type="ChEBI" id="CHEBI:37565"/>
    </ligand>
</feature>
<feature type="binding site" evidence="1">
    <location>
        <begin position="60"/>
        <end position="64"/>
    </location>
    <ligand>
        <name>GTP</name>
        <dbReference type="ChEBI" id="CHEBI:37565"/>
    </ligand>
</feature>
<feature type="binding site" evidence="1">
    <location>
        <begin position="118"/>
        <end position="121"/>
    </location>
    <ligand>
        <name>GTP</name>
        <dbReference type="ChEBI" id="CHEBI:37565"/>
    </ligand>
</feature>
<feature type="modified residue" description="Cysteine methyl ester" evidence="2">
    <location>
        <position position="198"/>
    </location>
</feature>
<feature type="lipid moiety-binding region" description="S-geranylgeranyl cysteine" evidence="2">
    <location>
        <position position="198"/>
    </location>
</feature>
<feature type="strand" evidence="4">
    <location>
        <begin position="6"/>
        <end position="13"/>
    </location>
</feature>
<feature type="strand" evidence="4">
    <location>
        <begin position="15"/>
        <end position="17"/>
    </location>
</feature>
<feature type="helix" evidence="4">
    <location>
        <begin position="19"/>
        <end position="27"/>
    </location>
</feature>
<feature type="strand" evidence="4">
    <location>
        <begin position="43"/>
        <end position="49"/>
    </location>
</feature>
<feature type="strand" evidence="4">
    <location>
        <begin position="52"/>
        <end position="59"/>
    </location>
</feature>
<feature type="turn" evidence="4">
    <location>
        <begin position="62"/>
        <end position="66"/>
    </location>
</feature>
<feature type="helix" evidence="4">
    <location>
        <begin position="68"/>
        <end position="70"/>
    </location>
</feature>
<feature type="strand" evidence="4">
    <location>
        <begin position="79"/>
        <end position="86"/>
    </location>
</feature>
<feature type="helix" evidence="4">
    <location>
        <begin position="90"/>
        <end position="98"/>
    </location>
</feature>
<feature type="helix" evidence="4">
    <location>
        <begin position="100"/>
        <end position="107"/>
    </location>
</feature>
<feature type="strand" evidence="4">
    <location>
        <begin position="113"/>
        <end position="118"/>
    </location>
</feature>
<feature type="turn" evidence="4">
    <location>
        <begin position="120"/>
        <end position="124"/>
    </location>
</feature>
<feature type="helix" evidence="4">
    <location>
        <begin position="126"/>
        <end position="131"/>
    </location>
</feature>
<feature type="helix" evidence="4">
    <location>
        <begin position="140"/>
        <end position="149"/>
    </location>
</feature>
<feature type="strand" evidence="4">
    <location>
        <begin position="153"/>
        <end position="157"/>
    </location>
</feature>
<feature type="turn" evidence="4">
    <location>
        <begin position="160"/>
        <end position="162"/>
    </location>
</feature>
<feature type="helix" evidence="4">
    <location>
        <begin position="166"/>
        <end position="176"/>
    </location>
</feature>
<reference key="1">
    <citation type="journal article" date="1997" name="Plant Mol. Biol.">
        <title>Cloning and characterization of rac-like cDNAs from Arabidopsis thaliana.</title>
        <authorList>
            <person name="Winge P."/>
            <person name="Brembu T."/>
            <person name="Bones A.M."/>
        </authorList>
    </citation>
    <scope>NUCLEOTIDE SEQUENCE [MRNA]</scope>
    <source>
        <strain>cv. Columbia</strain>
    </source>
</reference>
<reference key="2">
    <citation type="journal article" date="2000" name="Genetics">
        <title>Genetic structure and evolution of RAC-GTPases in Arabidopsis thaliana.</title>
        <authorList>
            <person name="Winge P."/>
            <person name="Brembu T."/>
            <person name="Kristensen R."/>
            <person name="Bones A.M."/>
        </authorList>
    </citation>
    <scope>NUCLEOTIDE SEQUENCE [GENOMIC DNA]</scope>
    <source>
        <strain>cv. Landsberg erecta</strain>
    </source>
</reference>
<reference key="3">
    <citation type="journal article" date="1997" name="DNA Res.">
        <title>Structural analysis of Arabidopsis thaliana chromosome 5. II. Sequence features of the regions of 1,044,062 bp covered by thirteen physically assigned P1 clones.</title>
        <authorList>
            <person name="Kotani H."/>
            <person name="Nakamura Y."/>
            <person name="Sato S."/>
            <person name="Kaneko T."/>
            <person name="Asamizu E."/>
            <person name="Miyajima N."/>
            <person name="Tabata S."/>
        </authorList>
    </citation>
    <scope>NUCLEOTIDE SEQUENCE [LARGE SCALE GENOMIC DNA]</scope>
    <source>
        <strain>cv. Columbia</strain>
    </source>
</reference>
<reference key="4">
    <citation type="journal article" date="2017" name="Plant J.">
        <title>Araport11: a complete reannotation of the Arabidopsis thaliana reference genome.</title>
        <authorList>
            <person name="Cheng C.Y."/>
            <person name="Krishnakumar V."/>
            <person name="Chan A.P."/>
            <person name="Thibaud-Nissen F."/>
            <person name="Schobel S."/>
            <person name="Town C.D."/>
        </authorList>
    </citation>
    <scope>GENOME REANNOTATION</scope>
    <source>
        <strain>cv. Columbia</strain>
    </source>
</reference>
<proteinExistence type="evidence at protein level"/>
<sequence>MSTARFIKCVTVGDGAVGKTCMLISYTSNTFPTDYVPTVFDNFSANVVVDGSTVNLGLWDTAGQEDYNRLRPLSYRGADVFLLAFSLISKASYENIHKKWLPELKHYAPGIPIVLVGTKLDLRDDKQFLKDHPGAASITTAQGEELRKMIGAVRYLECSSKTQQNVKAVFDTAIRVALRPPKAKKKIKPLKTKRSRICFFL</sequence>
<gene>
    <name type="primary">ARAC2</name>
    <name type="synonym">ROP7</name>
    <name type="ordered locus">At5g45970</name>
    <name type="ORF">MCL19.1</name>
</gene>
<organism>
    <name type="scientific">Arabidopsis thaliana</name>
    <name type="common">Mouse-ear cress</name>
    <dbReference type="NCBI Taxonomy" id="3702"/>
    <lineage>
        <taxon>Eukaryota</taxon>
        <taxon>Viridiplantae</taxon>
        <taxon>Streptophyta</taxon>
        <taxon>Embryophyta</taxon>
        <taxon>Tracheophyta</taxon>
        <taxon>Spermatophyta</taxon>
        <taxon>Magnoliopsida</taxon>
        <taxon>eudicotyledons</taxon>
        <taxon>Gunneridae</taxon>
        <taxon>Pentapetalae</taxon>
        <taxon>rosids</taxon>
        <taxon>malvids</taxon>
        <taxon>Brassicales</taxon>
        <taxon>Brassicaceae</taxon>
        <taxon>Camelineae</taxon>
        <taxon>Arabidopsis</taxon>
    </lineage>
</organism>
<evidence type="ECO:0000250" key="1"/>
<evidence type="ECO:0000255" key="2"/>
<evidence type="ECO:0000305" key="3"/>
<evidence type="ECO:0007829" key="4">
    <source>
        <dbReference type="PDB" id="2WBL"/>
    </source>
</evidence>
<keyword id="KW-0002">3D-structure</keyword>
<keyword id="KW-0963">Cytoplasm</keyword>
<keyword id="KW-0342">GTP-binding</keyword>
<keyword id="KW-0449">Lipoprotein</keyword>
<keyword id="KW-0472">Membrane</keyword>
<keyword id="KW-0488">Methylation</keyword>
<keyword id="KW-0547">Nucleotide-binding</keyword>
<keyword id="KW-0636">Prenylation</keyword>
<keyword id="KW-1185">Reference proteome</keyword>